<feature type="chain" id="PRO_0000441142" description="Cytochrome P450 monooxygenase FUM2">
    <location>
        <begin position="1"/>
        <end position="470"/>
    </location>
</feature>
<feature type="binding site" description="axial binding residue" evidence="1">
    <location>
        <position position="414"/>
    </location>
    <ligand>
        <name>heme</name>
        <dbReference type="ChEBI" id="CHEBI:30413"/>
    </ligand>
    <ligandPart>
        <name>Fe</name>
        <dbReference type="ChEBI" id="CHEBI:18248"/>
    </ligandPart>
</feature>
<comment type="function">
    <text evidence="2 3 7">Cytochrome P450 monooxygenase; part of the gene cluster that mediates the biosynthesis of fumonisins B1 (FB1), B2 (FB2), B3 (FB3), and B4 (FB4), which are carcinogenic mycotoxins (PubMed:12620260, PubMed:16536629). Within the pathway, FUM2 performs the C-10 hydroxylation present in FB2 and FB4 and which occurs early in the biosynthesis (PubMed:16536629). The biosynthesis starts with the FUM1-catalyzed carbon chain assembly from one molecule of acetyl-CoA, eight molecules of malonyl-CoA, and two molecules of methionine (in S-adenosyl form). The C18 polyketide chain is released from the enzyme by a nucleophilic attack of a carbanion, which is derived from R-carbon of alanine by decarboxylation, on the carbonyl carbon of polyketide acyl chain. This step is catalyzed by the pyridoxal 5'-phosphate-dependent aminoacyl transferase FUM8. The resultant 3-keto intermediate is then stereospecifically reduced to a 3-hydroxyl product by reductase FUM13. Subsequent oxidations at C-10 by the cytochrome P450 monooxygenase FUM2, C-14 and C-15 by FUM6, FUM12 or FUM15, tricarballylic esterification of the hydroxyl groups on C-14 and C-15 by acyltransferase FUM14, and C-5 hydroxylation by 2-keto-glutarate-dependent dioxygenase FUM3 furnish the biosynthesis of fumonisins. The tricarballylic moieties are most likely derived from the citric acid cycle, and their addition to the carbon backbone may involve FUM7, FUM10, FUM11 and FUM14 (Probable).</text>
</comment>
<comment type="cofactor">
    <cofactor evidence="1">
        <name>heme</name>
        <dbReference type="ChEBI" id="CHEBI:30413"/>
    </cofactor>
</comment>
<comment type="pathway">
    <text evidence="2 3">Mycotoxin biosynthesis.</text>
</comment>
<comment type="disruption phenotype">
    <text evidence="3">Produces only fumonisins B2 and B4, both of which lack the C-10 hydroxyl (PubMed:16536629).</text>
</comment>
<comment type="similarity">
    <text evidence="6">Belongs to the cytochrome P450 family.</text>
</comment>
<comment type="sequence caution" evidence="6">
    <conflict type="erroneous initiation">
        <sequence resource="EMBL-CDS" id="AAN74815"/>
    </conflict>
    <text>Extended N-terminus.</text>
</comment>
<reference key="1">
    <citation type="journal article" date="2003" name="Fungal Genet. Biol.">
        <title>Co-expression of 15 contiguous genes delineates a fumonisin biosynthetic gene cluster in Gibberella moniliformis.</title>
        <authorList>
            <person name="Proctor R.H."/>
            <person name="Brown D.W."/>
            <person name="Plattner R.D."/>
            <person name="Desjardins A.E."/>
        </authorList>
    </citation>
    <scope>NUCLEOTIDE SEQUENCE [GENOMIC DNA]</scope>
    <scope>FUNCTION</scope>
    <scope>PATHWAY</scope>
    <source>
        <strain>M3125 / FGSC 7600</strain>
    </source>
</reference>
<reference key="2">
    <citation type="journal article" date="2010" name="Nature">
        <title>Comparative genomics reveals mobile pathogenicity chromosomes in Fusarium.</title>
        <authorList>
            <person name="Ma L.-J."/>
            <person name="van der Does H.C."/>
            <person name="Borkovich K.A."/>
            <person name="Coleman J.J."/>
            <person name="Daboussi M.-J."/>
            <person name="Di Pietro A."/>
            <person name="Dufresne M."/>
            <person name="Freitag M."/>
            <person name="Grabherr M."/>
            <person name="Henrissat B."/>
            <person name="Houterman P.M."/>
            <person name="Kang S."/>
            <person name="Shim W.-B."/>
            <person name="Woloshuk C."/>
            <person name="Xie X."/>
            <person name="Xu J.-R."/>
            <person name="Antoniw J."/>
            <person name="Baker S.E."/>
            <person name="Bluhm B.H."/>
            <person name="Breakspear A."/>
            <person name="Brown D.W."/>
            <person name="Butchko R.A.E."/>
            <person name="Chapman S."/>
            <person name="Coulson R."/>
            <person name="Coutinho P.M."/>
            <person name="Danchin E.G.J."/>
            <person name="Diener A."/>
            <person name="Gale L.R."/>
            <person name="Gardiner D.M."/>
            <person name="Goff S."/>
            <person name="Hammond-Kosack K.E."/>
            <person name="Hilburn K."/>
            <person name="Hua-Van A."/>
            <person name="Jonkers W."/>
            <person name="Kazan K."/>
            <person name="Kodira C.D."/>
            <person name="Koehrsen M."/>
            <person name="Kumar L."/>
            <person name="Lee Y.-H."/>
            <person name="Li L."/>
            <person name="Manners J.M."/>
            <person name="Miranda-Saavedra D."/>
            <person name="Mukherjee M."/>
            <person name="Park G."/>
            <person name="Park J."/>
            <person name="Park S.-Y."/>
            <person name="Proctor R.H."/>
            <person name="Regev A."/>
            <person name="Ruiz-Roldan M.C."/>
            <person name="Sain D."/>
            <person name="Sakthikumar S."/>
            <person name="Sykes S."/>
            <person name="Schwartz D.C."/>
            <person name="Turgeon B.G."/>
            <person name="Wapinski I."/>
            <person name="Yoder O."/>
            <person name="Young S."/>
            <person name="Zeng Q."/>
            <person name="Zhou S."/>
            <person name="Galagan J."/>
            <person name="Cuomo C.A."/>
            <person name="Kistler H.C."/>
            <person name="Rep M."/>
        </authorList>
    </citation>
    <scope>NUCLEOTIDE SEQUENCE [LARGE SCALE GENOMIC DNA]</scope>
    <source>
        <strain>M3125 / FGSC 7600</strain>
    </source>
</reference>
<reference key="3">
    <citation type="journal article" date="1996" name="Adv. Exp. Med. Biol.">
        <title>Genetic and biochemical aspects of fumonisin production.</title>
        <authorList>
            <person name="Desjardins A.E."/>
            <person name="Plattner R.D."/>
            <person name="Proctor R.H."/>
        </authorList>
    </citation>
    <scope>IDENTIFICATION</scope>
</reference>
<reference key="4">
    <citation type="journal article" date="2006" name="J. Agric. Food Chem.">
        <title>Fumonisin production in the maize pathogen Fusarium verticillioides: genetic basis of naturally occurring chemical variation.</title>
        <authorList>
            <person name="Proctor R.H."/>
            <person name="Plattner R.D."/>
            <person name="Desjardins A.E."/>
            <person name="Busman M."/>
            <person name="Butchko R.A."/>
        </authorList>
    </citation>
    <scope>FUNCTION</scope>
    <scope>DISRUPTION PHENOTYPE</scope>
    <scope>PATHWAY</scope>
</reference>
<accession>W7L9E5</accession>
<accession>Q8J2Q8</accession>
<gene>
    <name evidence="5" type="primary">FUM2</name>
    <name evidence="4" type="synonym">FUM12</name>
    <name type="ORF">FVEG_00323</name>
</gene>
<evidence type="ECO:0000250" key="1">
    <source>
        <dbReference type="UniProtKB" id="P04798"/>
    </source>
</evidence>
<evidence type="ECO:0000269" key="2">
    <source>
    </source>
</evidence>
<evidence type="ECO:0000269" key="3">
    <source>
    </source>
</evidence>
<evidence type="ECO:0000303" key="4">
    <source>
    </source>
</evidence>
<evidence type="ECO:0000303" key="5">
    <source>
    </source>
</evidence>
<evidence type="ECO:0000305" key="6"/>
<evidence type="ECO:0000305" key="7">
    <source>
    </source>
</evidence>
<keyword id="KW-0349">Heme</keyword>
<keyword id="KW-0408">Iron</keyword>
<keyword id="KW-0479">Metal-binding</keyword>
<keyword id="KW-0503">Monooxygenase</keyword>
<keyword id="KW-0560">Oxidoreductase</keyword>
<keyword id="KW-1185">Reference proteome</keyword>
<organism>
    <name type="scientific">Gibberella moniliformis (strain M3125 / FGSC 7600)</name>
    <name type="common">Maize ear and stalk rot fungus</name>
    <name type="synonym">Fusarium verticillioides</name>
    <dbReference type="NCBI Taxonomy" id="334819"/>
    <lineage>
        <taxon>Eukaryota</taxon>
        <taxon>Fungi</taxon>
        <taxon>Dikarya</taxon>
        <taxon>Ascomycota</taxon>
        <taxon>Pezizomycotina</taxon>
        <taxon>Sordariomycetes</taxon>
        <taxon>Hypocreomycetidae</taxon>
        <taxon>Hypocreales</taxon>
        <taxon>Nectriaceae</taxon>
        <taxon>Fusarium</taxon>
        <taxon>Fusarium fujikuroi species complex</taxon>
    </lineage>
</organism>
<name>FUM2_GIBM7</name>
<dbReference type="EC" id="1.-.-.-" evidence="7"/>
<dbReference type="EMBL" id="AF155773">
    <property type="protein sequence ID" value="AAN74815.2"/>
    <property type="status" value="ALT_INIT"/>
    <property type="molecule type" value="Genomic_DNA"/>
</dbReference>
<dbReference type="EMBL" id="CM000578">
    <property type="protein sequence ID" value="EWG36203.1"/>
    <property type="molecule type" value="Genomic_DNA"/>
</dbReference>
<dbReference type="RefSeq" id="XP_018742394.1">
    <property type="nucleotide sequence ID" value="XM_018886760.1"/>
</dbReference>
<dbReference type="SMR" id="W7L9E5"/>
<dbReference type="STRING" id="334819.W7L9E5"/>
<dbReference type="GeneID" id="30058700"/>
<dbReference type="KEGG" id="fvr:FVEG_00323"/>
<dbReference type="VEuPathDB" id="FungiDB:FVEG_00323"/>
<dbReference type="eggNOG" id="KOG0158">
    <property type="taxonomic scope" value="Eukaryota"/>
</dbReference>
<dbReference type="OrthoDB" id="68312at110618"/>
<dbReference type="Proteomes" id="UP000009096">
    <property type="component" value="Chromosome 1"/>
</dbReference>
<dbReference type="GO" id="GO:0020037">
    <property type="term" value="F:heme binding"/>
    <property type="evidence" value="ECO:0007669"/>
    <property type="project" value="InterPro"/>
</dbReference>
<dbReference type="GO" id="GO:0005506">
    <property type="term" value="F:iron ion binding"/>
    <property type="evidence" value="ECO:0007669"/>
    <property type="project" value="InterPro"/>
</dbReference>
<dbReference type="GO" id="GO:0004497">
    <property type="term" value="F:monooxygenase activity"/>
    <property type="evidence" value="ECO:0007669"/>
    <property type="project" value="UniProtKB-KW"/>
</dbReference>
<dbReference type="GO" id="GO:0016705">
    <property type="term" value="F:oxidoreductase activity, acting on paired donors, with incorporation or reduction of molecular oxygen"/>
    <property type="evidence" value="ECO:0007669"/>
    <property type="project" value="InterPro"/>
</dbReference>
<dbReference type="GO" id="GO:1900541">
    <property type="term" value="P:fumonisin biosynthetic process"/>
    <property type="evidence" value="ECO:0000315"/>
    <property type="project" value="GO_Central"/>
</dbReference>
<dbReference type="CDD" id="cd11058">
    <property type="entry name" value="CYP60B-like"/>
    <property type="match status" value="1"/>
</dbReference>
<dbReference type="Gene3D" id="1.10.630.10">
    <property type="entry name" value="Cytochrome P450"/>
    <property type="match status" value="1"/>
</dbReference>
<dbReference type="InterPro" id="IPR001128">
    <property type="entry name" value="Cyt_P450"/>
</dbReference>
<dbReference type="InterPro" id="IPR002401">
    <property type="entry name" value="Cyt_P450_E_grp-I"/>
</dbReference>
<dbReference type="InterPro" id="IPR036396">
    <property type="entry name" value="Cyt_P450_sf"/>
</dbReference>
<dbReference type="InterPro" id="IPR050121">
    <property type="entry name" value="Cytochrome_P450_monoxygenase"/>
</dbReference>
<dbReference type="PANTHER" id="PTHR24305">
    <property type="entry name" value="CYTOCHROME P450"/>
    <property type="match status" value="1"/>
</dbReference>
<dbReference type="PANTHER" id="PTHR24305:SF210">
    <property type="entry name" value="CYTOCHROME P450 MONOOXYGENASE ASQL-RELATED"/>
    <property type="match status" value="1"/>
</dbReference>
<dbReference type="Pfam" id="PF00067">
    <property type="entry name" value="p450"/>
    <property type="match status" value="1"/>
</dbReference>
<dbReference type="PRINTS" id="PR00463">
    <property type="entry name" value="EP450I"/>
</dbReference>
<dbReference type="PRINTS" id="PR00385">
    <property type="entry name" value="P450"/>
</dbReference>
<dbReference type="SUPFAM" id="SSF48264">
    <property type="entry name" value="Cytochrome P450"/>
    <property type="match status" value="1"/>
</dbReference>
<protein>
    <recommendedName>
        <fullName evidence="5">Cytochrome P450 monooxygenase FUM2</fullName>
        <ecNumber evidence="7">1.-.-.-</ecNumber>
    </recommendedName>
    <alternativeName>
        <fullName evidence="5">Fumonisin biosynthesis cluster protein 2</fullName>
    </alternativeName>
</protein>
<sequence>MYNIFFHRASKFPGPTIAGATSFRYHWAMSTGNVAPWLREQHARYGEVVRIAPDMISYVSPDAWKDIYAYKPGEKEQNGIDWTIPSRDDDVPSMFSEPNDAEHNRVRRLFLPAFSDRALKQQEPLLSKYSDQLVHLIRRGIDDNRDQEFDAVKLYNFTTFDIMGDLTFGEPLGLLKNSSYSEWVQNLFRDIKTAGIFLFIFDFPPLPWLVKKFSPPSIQRAHEIHKQHTVDRVNRRLEKGLDRPDIWNLVLSQPEGRGLTHPQMHANADIFMIAGTETTATLLSGLTYLLLKNPEKLQRLVEEIRGSFGSIEELTVENLARLPYLSACLSEGLRCYPPVPIGPSRVTPKTGGQVLGERVPGRVRLTIPQCAAYYSDLNFKDPYSFIPERWLPGTGYESDRKGILQPFLIGPRNCIGQNLAYHEMRLILCKLLWHYDIELCPDKGNWLLDQKMYIFWEKRPLMVKFTKARK</sequence>
<proteinExistence type="inferred from homology"/>